<accession>Q9LJZ5</accession>
<accession>A8MSD2</accession>
<proteinExistence type="evidence at protein level"/>
<protein>
    <recommendedName>
        <fullName evidence="8">Ubiquitin-conjugating enzyme E2 19</fullName>
        <ecNumber>2.3.2.23</ecNumber>
    </recommendedName>
    <alternativeName>
        <fullName evidence="8">E2 ubiquitin-conjugating enzyme 19</fullName>
    </alternativeName>
    <alternativeName>
        <fullName evidence="8">Ubiquitin carrier protein 19</fullName>
    </alternativeName>
</protein>
<gene>
    <name evidence="8" type="primary">UBC19</name>
    <name evidence="10" type="ordered locus">At3g20060</name>
    <name evidence="11" type="ORF">MAL21.6</name>
</gene>
<organism>
    <name type="scientific">Arabidopsis thaliana</name>
    <name type="common">Mouse-ear cress</name>
    <dbReference type="NCBI Taxonomy" id="3702"/>
    <lineage>
        <taxon>Eukaryota</taxon>
        <taxon>Viridiplantae</taxon>
        <taxon>Streptophyta</taxon>
        <taxon>Embryophyta</taxon>
        <taxon>Tracheophyta</taxon>
        <taxon>Spermatophyta</taxon>
        <taxon>Magnoliopsida</taxon>
        <taxon>eudicotyledons</taxon>
        <taxon>Gunneridae</taxon>
        <taxon>Pentapetalae</taxon>
        <taxon>rosids</taxon>
        <taxon>malvids</taxon>
        <taxon>Brassicales</taxon>
        <taxon>Brassicaceae</taxon>
        <taxon>Camelineae</taxon>
        <taxon>Arabidopsis</taxon>
    </lineage>
</organism>
<reference key="1">
    <citation type="journal article" date="2002" name="Plant Physiol.">
        <title>Molecular characterization of plant ubiquitin-conjugating enzymes belonging to the UbcP4/E2-C/UBCx/UbcH10 gene family.</title>
        <authorList>
            <person name="Criqui M.C."/>
            <person name="de Almeida Engler J."/>
            <person name="Camasses A."/>
            <person name="Capron A."/>
            <person name="Parmentier Y."/>
            <person name="Inze D."/>
            <person name="Genschik P."/>
        </authorList>
    </citation>
    <scope>NUCLEOTIDE SEQUENCE [MRNA] (ISOFORM 1)</scope>
    <scope>FUNCTION</scope>
    <scope>TISSUE SPECIFICITY</scope>
    <scope>SUBCELLULAR LOCATION</scope>
    <scope>INDUCTION</scope>
    <scope>MUTAGENESIS OF CYS-120</scope>
</reference>
<reference key="2">
    <citation type="journal article" date="2005" name="Plant Physiol.">
        <title>Genome analysis and functional characterization of the E2 and RING-type E3 ligase ubiquitination enzymes of Arabidopsis.</title>
        <authorList>
            <person name="Kraft E."/>
            <person name="Stone S.L."/>
            <person name="Ma L."/>
            <person name="Su N."/>
            <person name="Gao Y."/>
            <person name="Lau O.-S."/>
            <person name="Deng X.-W."/>
            <person name="Callis J."/>
        </authorList>
    </citation>
    <scope>NUCLEOTIDE SEQUENCE [MRNA] (ISOFORM 1)</scope>
    <scope>GENE FAMILY</scope>
    <scope>NOMENCLATURE</scope>
</reference>
<reference key="3">
    <citation type="journal article" date="2000" name="DNA Res.">
        <title>Structural analysis of Arabidopsis thaliana chromosome 3. II. Sequence features of the 4,251,695 bp regions covered by 90 P1, TAC and BAC clones.</title>
        <authorList>
            <person name="Kaneko T."/>
            <person name="Katoh T."/>
            <person name="Sato S."/>
            <person name="Nakamura Y."/>
            <person name="Asamizu E."/>
            <person name="Tabata S."/>
        </authorList>
    </citation>
    <scope>NUCLEOTIDE SEQUENCE [LARGE SCALE GENOMIC DNA]</scope>
    <source>
        <strain>cv. Columbia</strain>
    </source>
</reference>
<reference key="4">
    <citation type="journal article" date="2017" name="Plant J.">
        <title>Araport11: a complete reannotation of the Arabidopsis thaliana reference genome.</title>
        <authorList>
            <person name="Cheng C.Y."/>
            <person name="Krishnakumar V."/>
            <person name="Chan A.P."/>
            <person name="Thibaud-Nissen F."/>
            <person name="Schobel S."/>
            <person name="Town C.D."/>
        </authorList>
    </citation>
    <scope>GENOME REANNOTATION</scope>
    <source>
        <strain>cv. Columbia</strain>
    </source>
</reference>
<reference key="5">
    <citation type="submission" date="2006-05" db="EMBL/GenBank/DDBJ databases">
        <title>Arabidopsis ORF clones.</title>
        <authorList>
            <person name="Kim C.J."/>
            <person name="Chen H."/>
            <person name="Quinitio C."/>
            <person name="Shinn P."/>
            <person name="Ecker J.R."/>
        </authorList>
    </citation>
    <scope>NUCLEOTIDE SEQUENCE [LARGE SCALE MRNA] (ISOFORM 1)</scope>
    <source>
        <strain>cv. Columbia</strain>
    </source>
</reference>
<reference key="6">
    <citation type="journal article" date="2005" name="Cell Cycle">
        <title>Arabidopsis anaphase-promoting complexes: multiple activators and wide range of substrates might keep APC perpetually busy.</title>
        <authorList>
            <person name="Fueloep K."/>
            <person name="Tarayre S."/>
            <person name="Kelemen Z."/>
            <person name="Horvath G."/>
            <person name="Kevei Z."/>
            <person name="Nikovics K."/>
            <person name="Bako L."/>
            <person name="Brown S."/>
            <person name="Kondorosi A."/>
            <person name="Kondorosi E."/>
        </authorList>
    </citation>
    <scope>DEVELOPMENTAL STAGE</scope>
</reference>
<reference key="7">
    <citation type="journal article" date="2019" name="Mol. Plant">
        <title>LOWER TEMPERATURE 1 enhances ABA responses and plant drought tolerance by modulating the stability and localization of C2-domain ABA-related proteins in Arabidopsis.</title>
        <authorList>
            <person name="Qin T."/>
            <person name="Tian Q."/>
            <person name="Wang G."/>
            <person name="Xiong L."/>
        </authorList>
    </citation>
    <scope>INTERACTION WITH LOT1</scope>
    <source>
        <strain>cv. Columbia</strain>
    </source>
</reference>
<reference key="8">
    <citation type="journal article" date="2021" name="Plant Signal. Behav.">
        <title>UBC19 is a new interacting protein of ORANGE for its nuclear localization in Arabidopsis thaliana.</title>
        <authorList>
            <person name="Chen W.-C."/>
            <person name="Wang Q."/>
            <person name="Cao T.-J."/>
            <person name="Lu S."/>
        </authorList>
    </citation>
    <scope>FUNCTION</scope>
    <scope>DISRUPTION PHENOTYPE</scope>
    <scope>INTERACTION WITH OR</scope>
    <scope>SUBCELLULAR LOCATION</scope>
    <scope>DEVELOPMENTAL STAGE</scope>
    <source>
        <strain>cv. Columbia</strain>
    </source>
</reference>
<feature type="chain" id="PRO_0000345185" description="Ubiquitin-conjugating enzyme E2 19">
    <location>
        <begin position="1"/>
        <end position="181"/>
    </location>
</feature>
<feature type="domain" description="UBC core" evidence="1">
    <location>
        <begin position="36"/>
        <end position="181"/>
    </location>
</feature>
<feature type="region of interest" description="Disordered" evidence="3">
    <location>
        <begin position="1"/>
        <end position="33"/>
    </location>
</feature>
<feature type="compositionally biased region" description="Polar residues" evidence="3">
    <location>
        <begin position="1"/>
        <end position="10"/>
    </location>
</feature>
<feature type="compositionally biased region" description="Low complexity" evidence="3">
    <location>
        <begin position="11"/>
        <end position="20"/>
    </location>
</feature>
<feature type="active site" description="Glycyl thioester intermediate" evidence="1">
    <location>
        <position position="120"/>
    </location>
</feature>
<feature type="splice variant" id="VSP_034927" description="In isoform 2." evidence="9">
    <location>
        <begin position="1"/>
        <end position="45"/>
    </location>
</feature>
<feature type="mutagenesis site" description="Unable to form a complex with ubiquitin." evidence="4">
    <original>C</original>
    <variation>A</variation>
    <location>
        <position position="120"/>
    </location>
</feature>
<feature type="mutagenesis site" description="Formation of a stable oxygen-ester bond with ubiquitin." evidence="4">
    <original>C</original>
    <variation>S</variation>
    <location>
        <position position="120"/>
    </location>
</feature>
<sequence length="181" mass="19999">MATVNGYTGNTPAATTPAATGSKQSAPPTKTVDSHSVLKRLQSELMGLMMGADPGISAFPEEDNIFCWKGTITGSKDTVFEGTEYRLSLTFSNDYPFKSPKVKFETCCFHPNVDLYGNICLDILQDKWSSAYDVRTILLSIQSLLGEPNISSPLNNQAAQLWSNQEEYRKMVEKLYKPLNA</sequence>
<comment type="function">
    <text evidence="4 7">Accepts the ubiquitin from the E1 complex and catalyzes its covalent attachment to other proteins (PubMed:12427990). Part of the anaphase-promoting complex (APC) (PubMed:12427990). May have a key function during cell cycle and be involved in cyclin B1 degradation (PubMed:12427990). Triggers OR ubiquitination that mediates its subsequent nuclear localization (PubMed:34405771). Involved in the repression of early light-induced proteins (ELIPs, e.g. ELIP1 and ELIP2) expression, probably via OR nuclear relocalization (PubMed:34405771).</text>
</comment>
<comment type="catalytic activity">
    <reaction evidence="1 2">
        <text>S-ubiquitinyl-[E1 ubiquitin-activating enzyme]-L-cysteine + [E2 ubiquitin-conjugating enzyme]-L-cysteine = [E1 ubiquitin-activating enzyme]-L-cysteine + S-ubiquitinyl-[E2 ubiquitin-conjugating enzyme]-L-cysteine.</text>
        <dbReference type="EC" id="2.3.2.23"/>
    </reaction>
</comment>
<comment type="pathway">
    <text evidence="1">Protein modification; protein ubiquitination.</text>
</comment>
<comment type="subunit">
    <text evidence="6 7">Interacts with OR (PubMed:34405771). Binds to LOT1 (PubMed:31102784).</text>
</comment>
<comment type="subcellular location">
    <subcellularLocation>
        <location evidence="4 7">Cytoplasm</location>
    </subcellularLocation>
    <subcellularLocation>
        <location evidence="4 7">Nucleus</location>
    </subcellularLocation>
</comment>
<comment type="alternative products">
    <event type="alternative splicing"/>
    <isoform>
        <id>Q9LJZ5-1</id>
        <name>1</name>
        <sequence type="displayed"/>
    </isoform>
    <isoform>
        <id>Q9LJZ5-2</id>
        <name>2</name>
        <sequence type="described" ref="VSP_034927"/>
    </isoform>
</comment>
<comment type="tissue specificity">
    <text evidence="4">Expressed in all tissues with cell division activities and in mature leaves.</text>
</comment>
<comment type="developmental stage">
    <text evidence="5 7">Expressed during the G1-S phases of the cell cycle (PubMed:15970679). Constant levels during deetiolation (PubMed:34405771).</text>
</comment>
<comment type="induction">
    <text evidence="4">Seems not induced by heat shock, dark to light transition, proteasome inhibitor MG132 or geldanamycin.</text>
</comment>
<comment type="disruption phenotype">
    <text evidence="7">Increased expression levels of ELIP1 and ELIP2, especially upon illumination.</text>
</comment>
<comment type="similarity">
    <text evidence="1">Belongs to the ubiquitin-conjugating enzyme family.</text>
</comment>
<evidence type="ECO:0000255" key="1">
    <source>
        <dbReference type="PROSITE-ProRule" id="PRU00388"/>
    </source>
</evidence>
<evidence type="ECO:0000255" key="2">
    <source>
        <dbReference type="PROSITE-ProRule" id="PRU10133"/>
    </source>
</evidence>
<evidence type="ECO:0000256" key="3">
    <source>
        <dbReference type="SAM" id="MobiDB-lite"/>
    </source>
</evidence>
<evidence type="ECO:0000269" key="4">
    <source>
    </source>
</evidence>
<evidence type="ECO:0000269" key="5">
    <source>
    </source>
</evidence>
<evidence type="ECO:0000269" key="6">
    <source>
    </source>
</evidence>
<evidence type="ECO:0000269" key="7">
    <source>
    </source>
</evidence>
<evidence type="ECO:0000303" key="8">
    <source>
    </source>
</evidence>
<evidence type="ECO:0000305" key="9"/>
<evidence type="ECO:0000312" key="10">
    <source>
        <dbReference type="Araport" id="AT3G20060"/>
    </source>
</evidence>
<evidence type="ECO:0000312" key="11">
    <source>
        <dbReference type="EMBL" id="BAB01863.1"/>
    </source>
</evidence>
<name>UBC19_ARATH</name>
<dbReference type="EC" id="2.3.2.23"/>
<dbReference type="EMBL" id="AY127573">
    <property type="protein sequence ID" value="AAM96886.1"/>
    <property type="molecule type" value="mRNA"/>
</dbReference>
<dbReference type="EMBL" id="DQ027033">
    <property type="protein sequence ID" value="AAY44859.1"/>
    <property type="molecule type" value="mRNA"/>
</dbReference>
<dbReference type="EMBL" id="AP000383">
    <property type="protein sequence ID" value="BAB01863.1"/>
    <property type="molecule type" value="Genomic_DNA"/>
</dbReference>
<dbReference type="EMBL" id="CP002686">
    <property type="protein sequence ID" value="AEE76325.1"/>
    <property type="molecule type" value="Genomic_DNA"/>
</dbReference>
<dbReference type="EMBL" id="CP002686">
    <property type="protein sequence ID" value="AEE76326.1"/>
    <property type="molecule type" value="Genomic_DNA"/>
</dbReference>
<dbReference type="EMBL" id="BT025536">
    <property type="protein sequence ID" value="ABF58954.1"/>
    <property type="molecule type" value="mRNA"/>
</dbReference>
<dbReference type="RefSeq" id="NP_001078192.1">
    <molecule id="Q9LJZ5-2"/>
    <property type="nucleotide sequence ID" value="NM_001084723.1"/>
</dbReference>
<dbReference type="RefSeq" id="NP_566653.1">
    <molecule id="Q9LJZ5-1"/>
    <property type="nucleotide sequence ID" value="NM_112897.4"/>
</dbReference>
<dbReference type="SMR" id="Q9LJZ5"/>
<dbReference type="BioGRID" id="6877">
    <property type="interactions" value="1"/>
</dbReference>
<dbReference type="FunCoup" id="Q9LJZ5">
    <property type="interactions" value="2691"/>
</dbReference>
<dbReference type="IntAct" id="Q9LJZ5">
    <property type="interactions" value="1"/>
</dbReference>
<dbReference type="STRING" id="3702.Q9LJZ5"/>
<dbReference type="PaxDb" id="3702-AT3G20060.1"/>
<dbReference type="ProteomicsDB" id="228716">
    <molecule id="Q9LJZ5-1"/>
</dbReference>
<dbReference type="EnsemblPlants" id="AT3G20060.1">
    <molecule id="Q9LJZ5-1"/>
    <property type="protein sequence ID" value="AT3G20060.1"/>
    <property type="gene ID" value="AT3G20060"/>
</dbReference>
<dbReference type="EnsemblPlants" id="AT3G20060.2">
    <molecule id="Q9LJZ5-2"/>
    <property type="protein sequence ID" value="AT3G20060.2"/>
    <property type="gene ID" value="AT3G20060"/>
</dbReference>
<dbReference type="GeneID" id="821545"/>
<dbReference type="Gramene" id="AT3G20060.1">
    <molecule id="Q9LJZ5-1"/>
    <property type="protein sequence ID" value="AT3G20060.1"/>
    <property type="gene ID" value="AT3G20060"/>
</dbReference>
<dbReference type="Gramene" id="AT3G20060.2">
    <molecule id="Q9LJZ5-2"/>
    <property type="protein sequence ID" value="AT3G20060.2"/>
    <property type="gene ID" value="AT3G20060"/>
</dbReference>
<dbReference type="KEGG" id="ath:AT3G20060"/>
<dbReference type="Araport" id="AT3G20060"/>
<dbReference type="TAIR" id="AT3G20060">
    <property type="gene designation" value="UBC19"/>
</dbReference>
<dbReference type="eggNOG" id="KOG0421">
    <property type="taxonomic scope" value="Eukaryota"/>
</dbReference>
<dbReference type="HOGENOM" id="CLU_030988_9_2_1"/>
<dbReference type="InParanoid" id="Q9LJZ5"/>
<dbReference type="OMA" id="WNNQEEY"/>
<dbReference type="OrthoDB" id="10253686at2759"/>
<dbReference type="PhylomeDB" id="Q9LJZ5"/>
<dbReference type="UniPathway" id="UPA00143"/>
<dbReference type="PRO" id="PR:Q9LJZ5"/>
<dbReference type="Proteomes" id="UP000006548">
    <property type="component" value="Chromosome 3"/>
</dbReference>
<dbReference type="ExpressionAtlas" id="Q9LJZ5">
    <property type="expression patterns" value="baseline and differential"/>
</dbReference>
<dbReference type="GO" id="GO:0005737">
    <property type="term" value="C:cytoplasm"/>
    <property type="evidence" value="ECO:0000314"/>
    <property type="project" value="UniProtKB"/>
</dbReference>
<dbReference type="GO" id="GO:0005634">
    <property type="term" value="C:nucleus"/>
    <property type="evidence" value="ECO:0000314"/>
    <property type="project" value="UniProtKB"/>
</dbReference>
<dbReference type="GO" id="GO:0005524">
    <property type="term" value="F:ATP binding"/>
    <property type="evidence" value="ECO:0007669"/>
    <property type="project" value="UniProtKB-KW"/>
</dbReference>
<dbReference type="GO" id="GO:0061631">
    <property type="term" value="F:ubiquitin conjugating enzyme activity"/>
    <property type="evidence" value="ECO:0007669"/>
    <property type="project" value="UniProtKB-EC"/>
</dbReference>
<dbReference type="GO" id="GO:0004842">
    <property type="term" value="F:ubiquitin-protein transferase activity"/>
    <property type="evidence" value="ECO:0000314"/>
    <property type="project" value="TAIR"/>
</dbReference>
<dbReference type="GO" id="GO:0051301">
    <property type="term" value="P:cell division"/>
    <property type="evidence" value="ECO:0000270"/>
    <property type="project" value="TAIR"/>
</dbReference>
<dbReference type="GO" id="GO:0006605">
    <property type="term" value="P:protein targeting"/>
    <property type="evidence" value="ECO:0000315"/>
    <property type="project" value="UniProtKB"/>
</dbReference>
<dbReference type="GO" id="GO:0016567">
    <property type="term" value="P:protein ubiquitination"/>
    <property type="evidence" value="ECO:0007669"/>
    <property type="project" value="UniProtKB-UniPathway"/>
</dbReference>
<dbReference type="GO" id="GO:0009416">
    <property type="term" value="P:response to light stimulus"/>
    <property type="evidence" value="ECO:0000315"/>
    <property type="project" value="UniProtKB"/>
</dbReference>
<dbReference type="GO" id="GO:0006511">
    <property type="term" value="P:ubiquitin-dependent protein catabolic process"/>
    <property type="evidence" value="ECO:0000314"/>
    <property type="project" value="TAIR"/>
</dbReference>
<dbReference type="CDD" id="cd23791">
    <property type="entry name" value="UBCc_UBE2C"/>
    <property type="match status" value="1"/>
</dbReference>
<dbReference type="FunFam" id="3.10.110.10:FF:000047">
    <property type="entry name" value="ubiquitin-conjugating enzyme E2 20"/>
    <property type="match status" value="1"/>
</dbReference>
<dbReference type="Gene3D" id="3.10.110.10">
    <property type="entry name" value="Ubiquitin Conjugating Enzyme"/>
    <property type="match status" value="1"/>
</dbReference>
<dbReference type="InterPro" id="IPR050113">
    <property type="entry name" value="Ub_conjugating_enzyme"/>
</dbReference>
<dbReference type="InterPro" id="IPR000608">
    <property type="entry name" value="UBQ-conjugat_E2_core"/>
</dbReference>
<dbReference type="InterPro" id="IPR023313">
    <property type="entry name" value="UBQ-conjugating_AS"/>
</dbReference>
<dbReference type="InterPro" id="IPR016135">
    <property type="entry name" value="UBQ-conjugating_enzyme/RWD"/>
</dbReference>
<dbReference type="PANTHER" id="PTHR24067">
    <property type="entry name" value="UBIQUITIN-CONJUGATING ENZYME E2"/>
    <property type="match status" value="1"/>
</dbReference>
<dbReference type="Pfam" id="PF00179">
    <property type="entry name" value="UQ_con"/>
    <property type="match status" value="1"/>
</dbReference>
<dbReference type="SMART" id="SM00212">
    <property type="entry name" value="UBCc"/>
    <property type="match status" value="1"/>
</dbReference>
<dbReference type="SUPFAM" id="SSF54495">
    <property type="entry name" value="UBC-like"/>
    <property type="match status" value="1"/>
</dbReference>
<dbReference type="PROSITE" id="PS00183">
    <property type="entry name" value="UBC_1"/>
    <property type="match status" value="1"/>
</dbReference>
<dbReference type="PROSITE" id="PS50127">
    <property type="entry name" value="UBC_2"/>
    <property type="match status" value="1"/>
</dbReference>
<keyword id="KW-0025">Alternative splicing</keyword>
<keyword id="KW-0067">ATP-binding</keyword>
<keyword id="KW-0963">Cytoplasm</keyword>
<keyword id="KW-0547">Nucleotide-binding</keyword>
<keyword id="KW-0539">Nucleus</keyword>
<keyword id="KW-1185">Reference proteome</keyword>
<keyword id="KW-0808">Transferase</keyword>
<keyword id="KW-0833">Ubl conjugation pathway</keyword>